<name>RS9_ANASK</name>
<accession>B4UBJ2</accession>
<reference key="1">
    <citation type="submission" date="2008-08" db="EMBL/GenBank/DDBJ databases">
        <title>Complete sequence of Anaeromyxobacter sp. K.</title>
        <authorList>
            <consortium name="US DOE Joint Genome Institute"/>
            <person name="Lucas S."/>
            <person name="Copeland A."/>
            <person name="Lapidus A."/>
            <person name="Glavina del Rio T."/>
            <person name="Dalin E."/>
            <person name="Tice H."/>
            <person name="Bruce D."/>
            <person name="Goodwin L."/>
            <person name="Pitluck S."/>
            <person name="Saunders E."/>
            <person name="Brettin T."/>
            <person name="Detter J.C."/>
            <person name="Han C."/>
            <person name="Larimer F."/>
            <person name="Land M."/>
            <person name="Hauser L."/>
            <person name="Kyrpides N."/>
            <person name="Ovchinnikiva G."/>
            <person name="Beliaev A."/>
        </authorList>
    </citation>
    <scope>NUCLEOTIDE SEQUENCE [LARGE SCALE GENOMIC DNA]</scope>
    <source>
        <strain>K</strain>
    </source>
</reference>
<keyword id="KW-0687">Ribonucleoprotein</keyword>
<keyword id="KW-0689">Ribosomal protein</keyword>
<feature type="chain" id="PRO_1000128070" description="Small ribosomal subunit protein uS9">
    <location>
        <begin position="1"/>
        <end position="130"/>
    </location>
</feature>
<sequence length="130" mass="14390">MAIQANMTVGRRKEAVARVRLVPGTGNITINGRSMDEYFGRETSKMILVEPLKLVDQMGKLDVFVNAAGGGLSGQAGAIRHGISRALVELNPEYRPVLKKAGFMTRDARAVERKKYGRPGARKRFQFSKR</sequence>
<comment type="similarity">
    <text evidence="1">Belongs to the universal ribosomal protein uS9 family.</text>
</comment>
<evidence type="ECO:0000255" key="1">
    <source>
        <dbReference type="HAMAP-Rule" id="MF_00532"/>
    </source>
</evidence>
<evidence type="ECO:0000305" key="2"/>
<protein>
    <recommendedName>
        <fullName evidence="1">Small ribosomal subunit protein uS9</fullName>
    </recommendedName>
    <alternativeName>
        <fullName evidence="2">30S ribosomal protein S9</fullName>
    </alternativeName>
</protein>
<gene>
    <name evidence="1" type="primary">rpsI</name>
    <name type="ordered locus">AnaeK_3453</name>
</gene>
<organism>
    <name type="scientific">Anaeromyxobacter sp. (strain K)</name>
    <dbReference type="NCBI Taxonomy" id="447217"/>
    <lineage>
        <taxon>Bacteria</taxon>
        <taxon>Pseudomonadati</taxon>
        <taxon>Myxococcota</taxon>
        <taxon>Myxococcia</taxon>
        <taxon>Myxococcales</taxon>
        <taxon>Cystobacterineae</taxon>
        <taxon>Anaeromyxobacteraceae</taxon>
        <taxon>Anaeromyxobacter</taxon>
    </lineage>
</organism>
<dbReference type="EMBL" id="CP001131">
    <property type="protein sequence ID" value="ACG74666.1"/>
    <property type="molecule type" value="Genomic_DNA"/>
</dbReference>
<dbReference type="RefSeq" id="WP_011422420.1">
    <property type="nucleotide sequence ID" value="NC_011145.1"/>
</dbReference>
<dbReference type="SMR" id="B4UBJ2"/>
<dbReference type="KEGG" id="ank:AnaeK_3453"/>
<dbReference type="HOGENOM" id="CLU_046483_2_1_7"/>
<dbReference type="OrthoDB" id="9803965at2"/>
<dbReference type="Proteomes" id="UP000001871">
    <property type="component" value="Chromosome"/>
</dbReference>
<dbReference type="GO" id="GO:0022627">
    <property type="term" value="C:cytosolic small ribosomal subunit"/>
    <property type="evidence" value="ECO:0007669"/>
    <property type="project" value="TreeGrafter"/>
</dbReference>
<dbReference type="GO" id="GO:0003723">
    <property type="term" value="F:RNA binding"/>
    <property type="evidence" value="ECO:0007669"/>
    <property type="project" value="TreeGrafter"/>
</dbReference>
<dbReference type="GO" id="GO:0003735">
    <property type="term" value="F:structural constituent of ribosome"/>
    <property type="evidence" value="ECO:0007669"/>
    <property type="project" value="InterPro"/>
</dbReference>
<dbReference type="GO" id="GO:0006412">
    <property type="term" value="P:translation"/>
    <property type="evidence" value="ECO:0007669"/>
    <property type="project" value="UniProtKB-UniRule"/>
</dbReference>
<dbReference type="FunFam" id="3.30.230.10:FF:000001">
    <property type="entry name" value="30S ribosomal protein S9"/>
    <property type="match status" value="1"/>
</dbReference>
<dbReference type="Gene3D" id="3.30.230.10">
    <property type="match status" value="1"/>
</dbReference>
<dbReference type="HAMAP" id="MF_00532_B">
    <property type="entry name" value="Ribosomal_uS9_B"/>
    <property type="match status" value="1"/>
</dbReference>
<dbReference type="InterPro" id="IPR020568">
    <property type="entry name" value="Ribosomal_Su5_D2-typ_SF"/>
</dbReference>
<dbReference type="InterPro" id="IPR000754">
    <property type="entry name" value="Ribosomal_uS9"/>
</dbReference>
<dbReference type="InterPro" id="IPR023035">
    <property type="entry name" value="Ribosomal_uS9_bac/plastid"/>
</dbReference>
<dbReference type="InterPro" id="IPR020574">
    <property type="entry name" value="Ribosomal_uS9_CS"/>
</dbReference>
<dbReference type="InterPro" id="IPR014721">
    <property type="entry name" value="Ribsml_uS5_D2-typ_fold_subgr"/>
</dbReference>
<dbReference type="NCBIfam" id="NF001099">
    <property type="entry name" value="PRK00132.1"/>
    <property type="match status" value="1"/>
</dbReference>
<dbReference type="PANTHER" id="PTHR21569">
    <property type="entry name" value="RIBOSOMAL PROTEIN S9"/>
    <property type="match status" value="1"/>
</dbReference>
<dbReference type="PANTHER" id="PTHR21569:SF1">
    <property type="entry name" value="SMALL RIBOSOMAL SUBUNIT PROTEIN US9M"/>
    <property type="match status" value="1"/>
</dbReference>
<dbReference type="Pfam" id="PF00380">
    <property type="entry name" value="Ribosomal_S9"/>
    <property type="match status" value="1"/>
</dbReference>
<dbReference type="SUPFAM" id="SSF54211">
    <property type="entry name" value="Ribosomal protein S5 domain 2-like"/>
    <property type="match status" value="1"/>
</dbReference>
<dbReference type="PROSITE" id="PS00360">
    <property type="entry name" value="RIBOSOMAL_S9"/>
    <property type="match status" value="1"/>
</dbReference>
<proteinExistence type="inferred from homology"/>